<comment type="function">
    <text evidence="1">Reduces FMN, organic nitro compounds and disulfide DTNB. Involved in maintenance of the cellular redox state and the disulfide stress response (By similarity).</text>
</comment>
<comment type="cofactor">
    <cofactor evidence="1">
        <name>FMN</name>
        <dbReference type="ChEBI" id="CHEBI:58210"/>
    </cofactor>
</comment>
<comment type="similarity">
    <text evidence="2">Belongs to the flavin oxidoreductase frp family.</text>
</comment>
<feature type="chain" id="PRO_0000239727" description="NADPH-dependent oxidoreductase">
    <location>
        <begin position="1"/>
        <end position="251"/>
    </location>
</feature>
<organism>
    <name type="scientific">Staphylococcus aureus (strain USA300)</name>
    <dbReference type="NCBI Taxonomy" id="367830"/>
    <lineage>
        <taxon>Bacteria</taxon>
        <taxon>Bacillati</taxon>
        <taxon>Bacillota</taxon>
        <taxon>Bacilli</taxon>
        <taxon>Bacillales</taxon>
        <taxon>Staphylococcaceae</taxon>
        <taxon>Staphylococcus</taxon>
    </lineage>
</organism>
<keyword id="KW-0285">Flavoprotein</keyword>
<keyword id="KW-0288">FMN</keyword>
<keyword id="KW-0521">NADP</keyword>
<keyword id="KW-0560">Oxidoreductase</keyword>
<dbReference type="EC" id="1.6.-.-"/>
<dbReference type="EMBL" id="CP000255">
    <property type="protein sequence ID" value="ABD21165.1"/>
    <property type="molecule type" value="Genomic_DNA"/>
</dbReference>
<dbReference type="SMR" id="Q2FJN3"/>
<dbReference type="KEGG" id="saa:SAUSA300_0381"/>
<dbReference type="HOGENOM" id="CLU_070764_0_0_9"/>
<dbReference type="Proteomes" id="UP000001939">
    <property type="component" value="Chromosome"/>
</dbReference>
<dbReference type="GO" id="GO:0016491">
    <property type="term" value="F:oxidoreductase activity"/>
    <property type="evidence" value="ECO:0007669"/>
    <property type="project" value="UniProtKB-KW"/>
</dbReference>
<dbReference type="CDD" id="cd02146">
    <property type="entry name" value="NfsA-like"/>
    <property type="match status" value="1"/>
</dbReference>
<dbReference type="Gene3D" id="3.40.109.10">
    <property type="entry name" value="NADH Oxidase"/>
    <property type="match status" value="1"/>
</dbReference>
<dbReference type="InterPro" id="IPR016446">
    <property type="entry name" value="Flavin_OxRdtase_Frp"/>
</dbReference>
<dbReference type="InterPro" id="IPR029479">
    <property type="entry name" value="Nitroreductase"/>
</dbReference>
<dbReference type="InterPro" id="IPR000415">
    <property type="entry name" value="Nitroreductase-like"/>
</dbReference>
<dbReference type="NCBIfam" id="NF008033">
    <property type="entry name" value="PRK10765.1"/>
    <property type="match status" value="1"/>
</dbReference>
<dbReference type="PANTHER" id="PTHR43425:SF3">
    <property type="entry name" value="NADPH-DEPENDENT OXIDOREDUCTASE"/>
    <property type="match status" value="1"/>
</dbReference>
<dbReference type="PANTHER" id="PTHR43425">
    <property type="entry name" value="OXYGEN-INSENSITIVE NADPH NITROREDUCTASE"/>
    <property type="match status" value="1"/>
</dbReference>
<dbReference type="Pfam" id="PF00881">
    <property type="entry name" value="Nitroreductase"/>
    <property type="match status" value="1"/>
</dbReference>
<dbReference type="PIRSF" id="PIRSF005426">
    <property type="entry name" value="Frp"/>
    <property type="match status" value="1"/>
</dbReference>
<dbReference type="SUPFAM" id="SSF55469">
    <property type="entry name" value="FMN-dependent nitroreductase-like"/>
    <property type="match status" value="1"/>
</dbReference>
<sequence>MSEHVYNLVKKHHSVRKFKNKPLSEDVVKKLVEAGQSASTSSFLQAYSIIGIDDEKIKENLREVSGQPYVVENGYLFVFVIDYYRHHLVDQHAETDMENAYGSTEGLLVGAIDAALVAENIAVTAEDMGYGIVFLGSLRNDVERVREILDLPDYVFPVFGMAVGEPADDENGAAKPRLPFDHVFHHNKYHADKETQYAQMADYDQTISEYYDQRTNGNRKETWSQQIEMFLGNKARLDMLEQLQKSGLIQR</sequence>
<accession>Q2FJN3</accession>
<name>NFRA_STAA3</name>
<proteinExistence type="inferred from homology"/>
<reference key="1">
    <citation type="journal article" date="2006" name="Lancet">
        <title>Complete genome sequence of USA300, an epidemic clone of community-acquired meticillin-resistant Staphylococcus aureus.</title>
        <authorList>
            <person name="Diep B.A."/>
            <person name="Gill S.R."/>
            <person name="Chang R.F."/>
            <person name="Phan T.H."/>
            <person name="Chen J.H."/>
            <person name="Davidson M.G."/>
            <person name="Lin F."/>
            <person name="Lin J."/>
            <person name="Carleton H.A."/>
            <person name="Mongodin E.F."/>
            <person name="Sensabaugh G.F."/>
            <person name="Perdreau-Remington F."/>
        </authorList>
    </citation>
    <scope>NUCLEOTIDE SEQUENCE [LARGE SCALE GENOMIC DNA]</scope>
    <source>
        <strain>USA300</strain>
    </source>
</reference>
<gene>
    <name type="primary">nfrA</name>
    <name type="ordered locus">SAUSA300_0381</name>
</gene>
<evidence type="ECO:0000250" key="1"/>
<evidence type="ECO:0000305" key="2"/>
<protein>
    <recommendedName>
        <fullName>NADPH-dependent oxidoreductase</fullName>
        <ecNumber>1.6.-.-</ecNumber>
    </recommendedName>
</protein>